<reference key="1">
    <citation type="journal article" date="2004" name="Science">
        <title>The complete genome sequence of Propionibacterium acnes, a commensal of human skin.</title>
        <authorList>
            <person name="Brueggemann H."/>
            <person name="Henne A."/>
            <person name="Hoster F."/>
            <person name="Liesegang H."/>
            <person name="Wiezer A."/>
            <person name="Strittmatter A."/>
            <person name="Hujer S."/>
            <person name="Duerre P."/>
            <person name="Gottschalk G."/>
        </authorList>
    </citation>
    <scope>NUCLEOTIDE SEQUENCE [LARGE SCALE GENOMIC DNA]</scope>
    <source>
        <strain>DSM 16379 / KPA171202</strain>
    </source>
</reference>
<comment type="function">
    <text evidence="1">NAD-dependent protein deacetylase which modulates the activities of several enzymes which are inactive in their acetylated form.</text>
</comment>
<comment type="catalytic activity">
    <reaction evidence="1">
        <text>N(6)-acetyl-L-lysyl-[protein] + NAD(+) + H2O = 2''-O-acetyl-ADP-D-ribose + nicotinamide + L-lysyl-[protein]</text>
        <dbReference type="Rhea" id="RHEA:43636"/>
        <dbReference type="Rhea" id="RHEA-COMP:9752"/>
        <dbReference type="Rhea" id="RHEA-COMP:10731"/>
        <dbReference type="ChEBI" id="CHEBI:15377"/>
        <dbReference type="ChEBI" id="CHEBI:17154"/>
        <dbReference type="ChEBI" id="CHEBI:29969"/>
        <dbReference type="ChEBI" id="CHEBI:57540"/>
        <dbReference type="ChEBI" id="CHEBI:61930"/>
        <dbReference type="ChEBI" id="CHEBI:83767"/>
        <dbReference type="EC" id="2.3.1.286"/>
    </reaction>
</comment>
<comment type="cofactor">
    <cofactor evidence="1">
        <name>Zn(2+)</name>
        <dbReference type="ChEBI" id="CHEBI:29105"/>
    </cofactor>
    <text evidence="1">Binds 1 zinc ion per subunit.</text>
</comment>
<comment type="subcellular location">
    <subcellularLocation>
        <location evidence="1">Cytoplasm</location>
    </subcellularLocation>
</comment>
<comment type="similarity">
    <text evidence="1">Belongs to the sirtuin family. Class U subfamily.</text>
</comment>
<dbReference type="EC" id="2.3.1.286" evidence="1 2"/>
<dbReference type="EMBL" id="AE017283">
    <property type="protein sequence ID" value="AAT83878.1"/>
    <property type="molecule type" value="Genomic_DNA"/>
</dbReference>
<dbReference type="RefSeq" id="WP_002530780.1">
    <property type="nucleotide sequence ID" value="NZ_CP025935.1"/>
</dbReference>
<dbReference type="SMR" id="Q6A5T5"/>
<dbReference type="EnsemblBacteria" id="AAT83878">
    <property type="protein sequence ID" value="AAT83878"/>
    <property type="gene ID" value="PPA2172"/>
</dbReference>
<dbReference type="KEGG" id="pac:PPA2172"/>
<dbReference type="PATRIC" id="fig|267747.3.peg.2227"/>
<dbReference type="eggNOG" id="COG0846">
    <property type="taxonomic scope" value="Bacteria"/>
</dbReference>
<dbReference type="HOGENOM" id="CLU_023643_3_0_11"/>
<dbReference type="Proteomes" id="UP000000603">
    <property type="component" value="Chromosome"/>
</dbReference>
<dbReference type="GO" id="GO:0005737">
    <property type="term" value="C:cytoplasm"/>
    <property type="evidence" value="ECO:0007669"/>
    <property type="project" value="UniProtKB-SubCell"/>
</dbReference>
<dbReference type="GO" id="GO:0017136">
    <property type="term" value="F:histone deacetylase activity, NAD-dependent"/>
    <property type="evidence" value="ECO:0007669"/>
    <property type="project" value="TreeGrafter"/>
</dbReference>
<dbReference type="GO" id="GO:0070403">
    <property type="term" value="F:NAD+ binding"/>
    <property type="evidence" value="ECO:0007669"/>
    <property type="project" value="UniProtKB-UniRule"/>
</dbReference>
<dbReference type="GO" id="GO:0008270">
    <property type="term" value="F:zinc ion binding"/>
    <property type="evidence" value="ECO:0007669"/>
    <property type="project" value="UniProtKB-UniRule"/>
</dbReference>
<dbReference type="CDD" id="cd01407">
    <property type="entry name" value="SIR2-fam"/>
    <property type="match status" value="1"/>
</dbReference>
<dbReference type="Gene3D" id="3.30.1600.10">
    <property type="entry name" value="SIR2/SIRT2 'Small Domain"/>
    <property type="match status" value="1"/>
</dbReference>
<dbReference type="Gene3D" id="3.40.50.1220">
    <property type="entry name" value="TPP-binding domain"/>
    <property type="match status" value="1"/>
</dbReference>
<dbReference type="HAMAP" id="MF_01968">
    <property type="entry name" value="Sirtuin_ClassU"/>
    <property type="match status" value="1"/>
</dbReference>
<dbReference type="InterPro" id="IPR029035">
    <property type="entry name" value="DHS-like_NAD/FAD-binding_dom"/>
</dbReference>
<dbReference type="InterPro" id="IPR050134">
    <property type="entry name" value="NAD-dep_sirtuin_deacylases"/>
</dbReference>
<dbReference type="InterPro" id="IPR003000">
    <property type="entry name" value="Sirtuin"/>
</dbReference>
<dbReference type="InterPro" id="IPR026591">
    <property type="entry name" value="Sirtuin_cat_small_dom_sf"/>
</dbReference>
<dbReference type="InterPro" id="IPR028628">
    <property type="entry name" value="Sirtuin_class_U"/>
</dbReference>
<dbReference type="InterPro" id="IPR026590">
    <property type="entry name" value="Ssirtuin_cat_dom"/>
</dbReference>
<dbReference type="NCBIfam" id="NF001752">
    <property type="entry name" value="PRK00481.1-1"/>
    <property type="match status" value="1"/>
</dbReference>
<dbReference type="PANTHER" id="PTHR11085:SF4">
    <property type="entry name" value="NAD-DEPENDENT PROTEIN DEACYLASE"/>
    <property type="match status" value="1"/>
</dbReference>
<dbReference type="PANTHER" id="PTHR11085">
    <property type="entry name" value="NAD-DEPENDENT PROTEIN DEACYLASE SIRTUIN-5, MITOCHONDRIAL-RELATED"/>
    <property type="match status" value="1"/>
</dbReference>
<dbReference type="Pfam" id="PF02146">
    <property type="entry name" value="SIR2"/>
    <property type="match status" value="1"/>
</dbReference>
<dbReference type="SUPFAM" id="SSF52467">
    <property type="entry name" value="DHS-like NAD/FAD-binding domain"/>
    <property type="match status" value="1"/>
</dbReference>
<dbReference type="PROSITE" id="PS50305">
    <property type="entry name" value="SIRTUIN"/>
    <property type="match status" value="1"/>
</dbReference>
<name>NPD_CUTAK</name>
<protein>
    <recommendedName>
        <fullName evidence="1">NAD-dependent protein deacetylase</fullName>
        <ecNumber evidence="1 2">2.3.1.286</ecNumber>
    </recommendedName>
    <alternativeName>
        <fullName evidence="1">Regulatory protein SIR2 homolog</fullName>
    </alternativeName>
</protein>
<gene>
    <name evidence="1" type="primary">cobB</name>
    <name type="ordered locus">PPA2172</name>
</gene>
<sequence>MTGEQLAHWIEESTSTVFFGGAGMSTESGIPDFRSAGGLYTTQHDLPFPAEYMLSHSCLVEHPAEFFDFYRTYLVHPQARPNAGHRALAALERAGQVSTIITQNIDGLHQEAGSRQVIELHGSVHRNRCLACGRAHPLSVIMDAPGVPRCSCGGMVRPEVVLYEESLRSQDLDNATTAISTADLLIVGGTSLNVYPAAALLRFFRGRHLVFINREATGYDRAADLVIHDGLGKTLSAVQRAVMP</sequence>
<feature type="chain" id="PRO_0000110335" description="NAD-dependent protein deacetylase">
    <location>
        <begin position="1"/>
        <end position="244"/>
    </location>
</feature>
<feature type="domain" description="Deacetylase sirtuin-type" evidence="2">
    <location>
        <begin position="1"/>
        <end position="244"/>
    </location>
</feature>
<feature type="active site" description="Proton acceptor" evidence="2">
    <location>
        <position position="121"/>
    </location>
</feature>
<feature type="binding site" evidence="1">
    <location>
        <position position="22"/>
    </location>
    <ligand>
        <name>NAD(+)</name>
        <dbReference type="ChEBI" id="CHEBI:57540"/>
    </ligand>
</feature>
<feature type="binding site" evidence="1">
    <location>
        <position position="26"/>
    </location>
    <ligand>
        <name>NAD(+)</name>
        <dbReference type="ChEBI" id="CHEBI:57540"/>
    </ligand>
</feature>
<feature type="binding site" evidence="1">
    <location>
        <position position="33"/>
    </location>
    <ligand>
        <name>NAD(+)</name>
        <dbReference type="ChEBI" id="CHEBI:57540"/>
    </ligand>
</feature>
<feature type="binding site" evidence="1">
    <location>
        <position position="33"/>
    </location>
    <ligand>
        <name>nicotinamide</name>
        <dbReference type="ChEBI" id="CHEBI:17154"/>
    </ligand>
</feature>
<feature type="binding site" evidence="1">
    <location>
        <position position="34"/>
    </location>
    <ligand>
        <name>NAD(+)</name>
        <dbReference type="ChEBI" id="CHEBI:57540"/>
    </ligand>
</feature>
<feature type="binding site" evidence="1">
    <location>
        <position position="103"/>
    </location>
    <ligand>
        <name>NAD(+)</name>
        <dbReference type="ChEBI" id="CHEBI:57540"/>
    </ligand>
</feature>
<feature type="binding site" evidence="1">
    <location>
        <position position="105"/>
    </location>
    <ligand>
        <name>NAD(+)</name>
        <dbReference type="ChEBI" id="CHEBI:57540"/>
    </ligand>
</feature>
<feature type="binding site" evidence="1">
    <location>
        <position position="105"/>
    </location>
    <ligand>
        <name>nicotinamide</name>
        <dbReference type="ChEBI" id="CHEBI:17154"/>
    </ligand>
</feature>
<feature type="binding site" evidence="1">
    <location>
        <position position="106"/>
    </location>
    <ligand>
        <name>NAD(+)</name>
        <dbReference type="ChEBI" id="CHEBI:57540"/>
    </ligand>
</feature>
<feature type="binding site" evidence="1">
    <location>
        <position position="106"/>
    </location>
    <ligand>
        <name>nicotinamide</name>
        <dbReference type="ChEBI" id="CHEBI:17154"/>
    </ligand>
</feature>
<feature type="binding site" evidence="1">
    <location>
        <position position="121"/>
    </location>
    <ligand>
        <name>NAD(+)</name>
        <dbReference type="ChEBI" id="CHEBI:57540"/>
    </ligand>
</feature>
<feature type="binding site" evidence="1">
    <location>
        <position position="129"/>
    </location>
    <ligand>
        <name>Zn(2+)</name>
        <dbReference type="ChEBI" id="CHEBI:29105"/>
    </ligand>
</feature>
<feature type="binding site" evidence="1">
    <location>
        <position position="132"/>
    </location>
    <ligand>
        <name>Zn(2+)</name>
        <dbReference type="ChEBI" id="CHEBI:29105"/>
    </ligand>
</feature>
<feature type="binding site" evidence="1">
    <location>
        <position position="150"/>
    </location>
    <ligand>
        <name>Zn(2+)</name>
        <dbReference type="ChEBI" id="CHEBI:29105"/>
    </ligand>
</feature>
<feature type="binding site" evidence="1">
    <location>
        <position position="152"/>
    </location>
    <ligand>
        <name>Zn(2+)</name>
        <dbReference type="ChEBI" id="CHEBI:29105"/>
    </ligand>
</feature>
<feature type="binding site" evidence="1">
    <location>
        <position position="190"/>
    </location>
    <ligand>
        <name>NAD(+)</name>
        <dbReference type="ChEBI" id="CHEBI:57540"/>
    </ligand>
</feature>
<feature type="binding site" evidence="1">
    <location>
        <position position="191"/>
    </location>
    <ligand>
        <name>NAD(+)</name>
        <dbReference type="ChEBI" id="CHEBI:57540"/>
    </ligand>
</feature>
<feature type="binding site" evidence="1">
    <location>
        <position position="213"/>
    </location>
    <ligand>
        <name>NAD(+)</name>
        <dbReference type="ChEBI" id="CHEBI:57540"/>
    </ligand>
</feature>
<feature type="binding site" evidence="1">
    <location>
        <position position="231"/>
    </location>
    <ligand>
        <name>NAD(+)</name>
        <dbReference type="ChEBI" id="CHEBI:57540"/>
    </ligand>
</feature>
<proteinExistence type="inferred from homology"/>
<keyword id="KW-0963">Cytoplasm</keyword>
<keyword id="KW-0479">Metal-binding</keyword>
<keyword id="KW-0520">NAD</keyword>
<keyword id="KW-0808">Transferase</keyword>
<keyword id="KW-0862">Zinc</keyword>
<organism>
    <name type="scientific">Cutibacterium acnes (strain DSM 16379 / KPA171202)</name>
    <name type="common">Propionibacterium acnes</name>
    <dbReference type="NCBI Taxonomy" id="267747"/>
    <lineage>
        <taxon>Bacteria</taxon>
        <taxon>Bacillati</taxon>
        <taxon>Actinomycetota</taxon>
        <taxon>Actinomycetes</taxon>
        <taxon>Propionibacteriales</taxon>
        <taxon>Propionibacteriaceae</taxon>
        <taxon>Cutibacterium</taxon>
    </lineage>
</organism>
<accession>Q6A5T5</accession>
<evidence type="ECO:0000255" key="1">
    <source>
        <dbReference type="HAMAP-Rule" id="MF_01968"/>
    </source>
</evidence>
<evidence type="ECO:0000255" key="2">
    <source>
        <dbReference type="PROSITE-ProRule" id="PRU00236"/>
    </source>
</evidence>